<gene>
    <name evidence="2" type="primary">folE</name>
    <name type="ordered locus">Tfu_2894</name>
</gene>
<evidence type="ECO:0000250" key="1"/>
<evidence type="ECO:0000255" key="2">
    <source>
        <dbReference type="HAMAP-Rule" id="MF_00223"/>
    </source>
</evidence>
<protein>
    <recommendedName>
        <fullName evidence="2">GTP cyclohydrolase 1</fullName>
        <ecNumber evidence="2">3.5.4.16</ecNumber>
    </recommendedName>
    <alternativeName>
        <fullName evidence="2">GTP cyclohydrolase I</fullName>
        <shortName evidence="2">GTP-CH-I</shortName>
    </alternativeName>
</protein>
<dbReference type="EC" id="3.5.4.16" evidence="2"/>
<dbReference type="EMBL" id="CP000088">
    <property type="protein sequence ID" value="AAZ56927.1"/>
    <property type="molecule type" value="Genomic_DNA"/>
</dbReference>
<dbReference type="RefSeq" id="WP_011293317.1">
    <property type="nucleotide sequence ID" value="NC_007333.1"/>
</dbReference>
<dbReference type="SMR" id="Q47KU5"/>
<dbReference type="STRING" id="269800.Tfu_2894"/>
<dbReference type="KEGG" id="tfu:Tfu_2894"/>
<dbReference type="eggNOG" id="COG0302">
    <property type="taxonomic scope" value="Bacteria"/>
</dbReference>
<dbReference type="HOGENOM" id="CLU_049768_3_3_11"/>
<dbReference type="OrthoDB" id="9801207at2"/>
<dbReference type="UniPathway" id="UPA00848">
    <property type="reaction ID" value="UER00151"/>
</dbReference>
<dbReference type="GO" id="GO:0005737">
    <property type="term" value="C:cytoplasm"/>
    <property type="evidence" value="ECO:0007669"/>
    <property type="project" value="TreeGrafter"/>
</dbReference>
<dbReference type="GO" id="GO:0005525">
    <property type="term" value="F:GTP binding"/>
    <property type="evidence" value="ECO:0007669"/>
    <property type="project" value="UniProtKB-KW"/>
</dbReference>
<dbReference type="GO" id="GO:0003934">
    <property type="term" value="F:GTP cyclohydrolase I activity"/>
    <property type="evidence" value="ECO:0007669"/>
    <property type="project" value="UniProtKB-UniRule"/>
</dbReference>
<dbReference type="GO" id="GO:0008270">
    <property type="term" value="F:zinc ion binding"/>
    <property type="evidence" value="ECO:0007669"/>
    <property type="project" value="UniProtKB-UniRule"/>
</dbReference>
<dbReference type="GO" id="GO:0006730">
    <property type="term" value="P:one-carbon metabolic process"/>
    <property type="evidence" value="ECO:0007669"/>
    <property type="project" value="UniProtKB-UniRule"/>
</dbReference>
<dbReference type="GO" id="GO:0006729">
    <property type="term" value="P:tetrahydrobiopterin biosynthetic process"/>
    <property type="evidence" value="ECO:0007669"/>
    <property type="project" value="TreeGrafter"/>
</dbReference>
<dbReference type="GO" id="GO:0046654">
    <property type="term" value="P:tetrahydrofolate biosynthetic process"/>
    <property type="evidence" value="ECO:0007669"/>
    <property type="project" value="UniProtKB-UniRule"/>
</dbReference>
<dbReference type="CDD" id="cd00642">
    <property type="entry name" value="GTP_cyclohydro1"/>
    <property type="match status" value="1"/>
</dbReference>
<dbReference type="FunFam" id="1.10.286.10:FF:000001">
    <property type="entry name" value="GTP cyclohydrolase 1"/>
    <property type="match status" value="1"/>
</dbReference>
<dbReference type="FunFam" id="3.30.1130.10:FF:000001">
    <property type="entry name" value="GTP cyclohydrolase 1"/>
    <property type="match status" value="1"/>
</dbReference>
<dbReference type="Gene3D" id="1.10.286.10">
    <property type="match status" value="1"/>
</dbReference>
<dbReference type="Gene3D" id="3.30.1130.10">
    <property type="match status" value="1"/>
</dbReference>
<dbReference type="HAMAP" id="MF_00223">
    <property type="entry name" value="FolE"/>
    <property type="match status" value="1"/>
</dbReference>
<dbReference type="InterPro" id="IPR043133">
    <property type="entry name" value="GTP-CH-I_C/QueF"/>
</dbReference>
<dbReference type="InterPro" id="IPR043134">
    <property type="entry name" value="GTP-CH-I_N"/>
</dbReference>
<dbReference type="InterPro" id="IPR001474">
    <property type="entry name" value="GTP_CycHdrlase_I"/>
</dbReference>
<dbReference type="InterPro" id="IPR018234">
    <property type="entry name" value="GTP_CycHdrlase_I_CS"/>
</dbReference>
<dbReference type="InterPro" id="IPR020602">
    <property type="entry name" value="GTP_CycHdrlase_I_dom"/>
</dbReference>
<dbReference type="NCBIfam" id="TIGR00063">
    <property type="entry name" value="folE"/>
    <property type="match status" value="1"/>
</dbReference>
<dbReference type="NCBIfam" id="NF006825">
    <property type="entry name" value="PRK09347.1-2"/>
    <property type="match status" value="1"/>
</dbReference>
<dbReference type="NCBIfam" id="NF006826">
    <property type="entry name" value="PRK09347.1-3"/>
    <property type="match status" value="1"/>
</dbReference>
<dbReference type="PANTHER" id="PTHR11109:SF7">
    <property type="entry name" value="GTP CYCLOHYDROLASE 1"/>
    <property type="match status" value="1"/>
</dbReference>
<dbReference type="PANTHER" id="PTHR11109">
    <property type="entry name" value="GTP CYCLOHYDROLASE I"/>
    <property type="match status" value="1"/>
</dbReference>
<dbReference type="Pfam" id="PF01227">
    <property type="entry name" value="GTP_cyclohydroI"/>
    <property type="match status" value="1"/>
</dbReference>
<dbReference type="SUPFAM" id="SSF55620">
    <property type="entry name" value="Tetrahydrobiopterin biosynthesis enzymes-like"/>
    <property type="match status" value="1"/>
</dbReference>
<dbReference type="PROSITE" id="PS00859">
    <property type="entry name" value="GTP_CYCLOHYDROL_1_1"/>
    <property type="match status" value="1"/>
</dbReference>
<dbReference type="PROSITE" id="PS00860">
    <property type="entry name" value="GTP_CYCLOHYDROL_1_2"/>
    <property type="match status" value="1"/>
</dbReference>
<reference key="1">
    <citation type="journal article" date="2007" name="J. Bacteriol.">
        <title>Genome sequence and analysis of the soil cellulolytic actinomycete Thermobifida fusca YX.</title>
        <authorList>
            <person name="Lykidis A."/>
            <person name="Mavromatis K."/>
            <person name="Ivanova N."/>
            <person name="Anderson I."/>
            <person name="Land M."/>
            <person name="DiBartolo G."/>
            <person name="Martinez M."/>
            <person name="Lapidus A."/>
            <person name="Lucas S."/>
            <person name="Copeland A."/>
            <person name="Richardson P."/>
            <person name="Wilson D.B."/>
            <person name="Kyrpides N."/>
        </authorList>
    </citation>
    <scope>NUCLEOTIDE SEQUENCE [LARGE SCALE GENOMIC DNA]</scope>
    <source>
        <strain>YX</strain>
    </source>
</reference>
<keyword id="KW-0342">GTP-binding</keyword>
<keyword id="KW-0378">Hydrolase</keyword>
<keyword id="KW-0479">Metal-binding</keyword>
<keyword id="KW-0547">Nucleotide-binding</keyword>
<keyword id="KW-0554">One-carbon metabolism</keyword>
<keyword id="KW-0862">Zinc</keyword>
<name>GCH1_THEFY</name>
<sequence length="207" mass="23034">MTEYEYRVGDTDAGLAPAGIDQPRIEKAVREILLAIGEDPDRDGLVETPARVARAFAEQFAGLSQRPEDVLTTVFEANHEEMVLVKDIELYSTCEHHLVPFYGAAHVGYIPNTDGRITGLSKLARLVDIYARRPQVQERLTSQVADALMERLEPRGVIVVVEAEHLCMTMRGVRKPGAKTVTSAVRGAFRESYKTRAEAMDLILGRR</sequence>
<comment type="catalytic activity">
    <reaction evidence="2">
        <text>GTP + H2O = 7,8-dihydroneopterin 3'-triphosphate + formate + H(+)</text>
        <dbReference type="Rhea" id="RHEA:17473"/>
        <dbReference type="ChEBI" id="CHEBI:15377"/>
        <dbReference type="ChEBI" id="CHEBI:15378"/>
        <dbReference type="ChEBI" id="CHEBI:15740"/>
        <dbReference type="ChEBI" id="CHEBI:37565"/>
        <dbReference type="ChEBI" id="CHEBI:58462"/>
        <dbReference type="EC" id="3.5.4.16"/>
    </reaction>
</comment>
<comment type="pathway">
    <text evidence="2">Cofactor biosynthesis; 7,8-dihydroneopterin triphosphate biosynthesis; 7,8-dihydroneopterin triphosphate from GTP: step 1/1.</text>
</comment>
<comment type="subunit">
    <text evidence="1">Toroid-shaped homodecamer, composed of two pentamers of five dimers.</text>
</comment>
<comment type="similarity">
    <text evidence="2">Belongs to the GTP cyclohydrolase I family.</text>
</comment>
<organism>
    <name type="scientific">Thermobifida fusca (strain YX)</name>
    <dbReference type="NCBI Taxonomy" id="269800"/>
    <lineage>
        <taxon>Bacteria</taxon>
        <taxon>Bacillati</taxon>
        <taxon>Actinomycetota</taxon>
        <taxon>Actinomycetes</taxon>
        <taxon>Streptosporangiales</taxon>
        <taxon>Nocardiopsidaceae</taxon>
        <taxon>Thermobifida</taxon>
    </lineage>
</organism>
<accession>Q47KU5</accession>
<feature type="chain" id="PRO_1000043755" description="GTP cyclohydrolase 1">
    <location>
        <begin position="1"/>
        <end position="207"/>
    </location>
</feature>
<feature type="binding site" evidence="2">
    <location>
        <position position="94"/>
    </location>
    <ligand>
        <name>Zn(2+)</name>
        <dbReference type="ChEBI" id="CHEBI:29105"/>
    </ligand>
</feature>
<feature type="binding site" evidence="2">
    <location>
        <position position="97"/>
    </location>
    <ligand>
        <name>Zn(2+)</name>
        <dbReference type="ChEBI" id="CHEBI:29105"/>
    </ligand>
</feature>
<feature type="binding site" evidence="2">
    <location>
        <position position="167"/>
    </location>
    <ligand>
        <name>Zn(2+)</name>
        <dbReference type="ChEBI" id="CHEBI:29105"/>
    </ligand>
</feature>
<proteinExistence type="inferred from homology"/>